<gene>
    <name type="primary">ubx2</name>
    <name type="ORF">SPAC2C4.15c</name>
</gene>
<evidence type="ECO:0000250" key="1"/>
<evidence type="ECO:0000255" key="2">
    <source>
        <dbReference type="PROSITE-ProRule" id="PRU00215"/>
    </source>
</evidence>
<evidence type="ECO:0000256" key="3">
    <source>
        <dbReference type="SAM" id="MobiDB-lite"/>
    </source>
</evidence>
<evidence type="ECO:0000269" key="4">
    <source>
    </source>
</evidence>
<evidence type="ECO:0000269" key="5">
    <source>
    </source>
</evidence>
<comment type="function">
    <text evidence="1">Involved in CDC48-dependent protein degradation through the ubiquitin/proteasome pathway.</text>
</comment>
<comment type="subunit">
    <text evidence="4">Interacts with cdc48.</text>
</comment>
<keyword id="KW-0597">Phosphoprotein</keyword>
<keyword id="KW-1185">Reference proteome</keyword>
<keyword id="KW-0833">Ubl conjugation pathway</keyword>
<proteinExistence type="evidence at protein level"/>
<accession>O14048</accession>
<reference key="1">
    <citation type="journal article" date="2002" name="Nature">
        <title>The genome sequence of Schizosaccharomyces pombe.</title>
        <authorList>
            <person name="Wood V."/>
            <person name="Gwilliam R."/>
            <person name="Rajandream M.A."/>
            <person name="Lyne M.H."/>
            <person name="Lyne R."/>
            <person name="Stewart A."/>
            <person name="Sgouros J.G."/>
            <person name="Peat N."/>
            <person name="Hayles J."/>
            <person name="Baker S.G."/>
            <person name="Basham D."/>
            <person name="Bowman S."/>
            <person name="Brooks K."/>
            <person name="Brown D."/>
            <person name="Brown S."/>
            <person name="Chillingworth T."/>
            <person name="Churcher C.M."/>
            <person name="Collins M."/>
            <person name="Connor R."/>
            <person name="Cronin A."/>
            <person name="Davis P."/>
            <person name="Feltwell T."/>
            <person name="Fraser A."/>
            <person name="Gentles S."/>
            <person name="Goble A."/>
            <person name="Hamlin N."/>
            <person name="Harris D.E."/>
            <person name="Hidalgo J."/>
            <person name="Hodgson G."/>
            <person name="Holroyd S."/>
            <person name="Hornsby T."/>
            <person name="Howarth S."/>
            <person name="Huckle E.J."/>
            <person name="Hunt S."/>
            <person name="Jagels K."/>
            <person name="James K.D."/>
            <person name="Jones L."/>
            <person name="Jones M."/>
            <person name="Leather S."/>
            <person name="McDonald S."/>
            <person name="McLean J."/>
            <person name="Mooney P."/>
            <person name="Moule S."/>
            <person name="Mungall K.L."/>
            <person name="Murphy L.D."/>
            <person name="Niblett D."/>
            <person name="Odell C."/>
            <person name="Oliver K."/>
            <person name="O'Neil S."/>
            <person name="Pearson D."/>
            <person name="Quail M.A."/>
            <person name="Rabbinowitsch E."/>
            <person name="Rutherford K.M."/>
            <person name="Rutter S."/>
            <person name="Saunders D."/>
            <person name="Seeger K."/>
            <person name="Sharp S."/>
            <person name="Skelton J."/>
            <person name="Simmonds M.N."/>
            <person name="Squares R."/>
            <person name="Squares S."/>
            <person name="Stevens K."/>
            <person name="Taylor K."/>
            <person name="Taylor R.G."/>
            <person name="Tivey A."/>
            <person name="Walsh S.V."/>
            <person name="Warren T."/>
            <person name="Whitehead S."/>
            <person name="Woodward J.R."/>
            <person name="Volckaert G."/>
            <person name="Aert R."/>
            <person name="Robben J."/>
            <person name="Grymonprez B."/>
            <person name="Weltjens I."/>
            <person name="Vanstreels E."/>
            <person name="Rieger M."/>
            <person name="Schaefer M."/>
            <person name="Mueller-Auer S."/>
            <person name="Gabel C."/>
            <person name="Fuchs M."/>
            <person name="Duesterhoeft A."/>
            <person name="Fritzc C."/>
            <person name="Holzer E."/>
            <person name="Moestl D."/>
            <person name="Hilbert H."/>
            <person name="Borzym K."/>
            <person name="Langer I."/>
            <person name="Beck A."/>
            <person name="Lehrach H."/>
            <person name="Reinhardt R."/>
            <person name="Pohl T.M."/>
            <person name="Eger P."/>
            <person name="Zimmermann W."/>
            <person name="Wedler H."/>
            <person name="Wambutt R."/>
            <person name="Purnelle B."/>
            <person name="Goffeau A."/>
            <person name="Cadieu E."/>
            <person name="Dreano S."/>
            <person name="Gloux S."/>
            <person name="Lelaure V."/>
            <person name="Mottier S."/>
            <person name="Galibert F."/>
            <person name="Aves S.J."/>
            <person name="Xiang Z."/>
            <person name="Hunt C."/>
            <person name="Moore K."/>
            <person name="Hurst S.M."/>
            <person name="Lucas M."/>
            <person name="Rochet M."/>
            <person name="Gaillardin C."/>
            <person name="Tallada V.A."/>
            <person name="Garzon A."/>
            <person name="Thode G."/>
            <person name="Daga R.R."/>
            <person name="Cruzado L."/>
            <person name="Jimenez J."/>
            <person name="Sanchez M."/>
            <person name="del Rey F."/>
            <person name="Benito J."/>
            <person name="Dominguez A."/>
            <person name="Revuelta J.L."/>
            <person name="Moreno S."/>
            <person name="Armstrong J."/>
            <person name="Forsburg S.L."/>
            <person name="Cerutti L."/>
            <person name="Lowe T."/>
            <person name="McCombie W.R."/>
            <person name="Paulsen I."/>
            <person name="Potashkin J."/>
            <person name="Shpakovski G.V."/>
            <person name="Ussery D."/>
            <person name="Barrell B.G."/>
            <person name="Nurse P."/>
        </authorList>
    </citation>
    <scope>NUCLEOTIDE SEQUENCE [LARGE SCALE GENOMIC DNA]</scope>
    <source>
        <strain>972 / ATCC 24843</strain>
    </source>
</reference>
<reference key="2">
    <citation type="journal article" date="2004" name="Curr. Biol.">
        <title>The Ubx2 and Ubx3 cofactors direct Cdc48 activity to proteolytic and nonproteolytic ubiquitin-dependent processes.</title>
        <authorList>
            <person name="Hartmann-Petersen R."/>
            <person name="Wallace M."/>
            <person name="Hofmann K."/>
            <person name="Koch G."/>
            <person name="Johnsen A.H."/>
            <person name="Hendil K.B."/>
            <person name="Gordon C."/>
        </authorList>
    </citation>
    <scope>INTERACTION WITH CDC48</scope>
</reference>
<reference key="3">
    <citation type="journal article" date="2008" name="J. Proteome Res.">
        <title>Phosphoproteome analysis of fission yeast.</title>
        <authorList>
            <person name="Wilson-Grady J.T."/>
            <person name="Villen J."/>
            <person name="Gygi S.P."/>
        </authorList>
    </citation>
    <scope>PHOSPHORYLATION [LARGE SCALE ANALYSIS] AT SER-371</scope>
    <scope>IDENTIFICATION BY MASS SPECTROMETRY</scope>
</reference>
<dbReference type="EMBL" id="CU329670">
    <property type="protein sequence ID" value="CAB16375.1"/>
    <property type="molecule type" value="Genomic_DNA"/>
</dbReference>
<dbReference type="PIR" id="T38526">
    <property type="entry name" value="T38526"/>
</dbReference>
<dbReference type="RefSeq" id="NP_594518.1">
    <property type="nucleotide sequence ID" value="NM_001019947.2"/>
</dbReference>
<dbReference type="SMR" id="O14048"/>
<dbReference type="BioGRID" id="278032">
    <property type="interactions" value="38"/>
</dbReference>
<dbReference type="FunCoup" id="O14048">
    <property type="interactions" value="1022"/>
</dbReference>
<dbReference type="IntAct" id="O14048">
    <property type="interactions" value="3"/>
</dbReference>
<dbReference type="STRING" id="284812.O14048"/>
<dbReference type="iPTMnet" id="O14048"/>
<dbReference type="PaxDb" id="4896-SPAC2C4.15c.1"/>
<dbReference type="EnsemblFungi" id="SPAC2C4.15c.1">
    <property type="protein sequence ID" value="SPAC2C4.15c.1:pep"/>
    <property type="gene ID" value="SPAC2C4.15c"/>
</dbReference>
<dbReference type="GeneID" id="2541532"/>
<dbReference type="KEGG" id="spo:2541532"/>
<dbReference type="PomBase" id="SPAC2C4.15c">
    <property type="gene designation" value="ubx2"/>
</dbReference>
<dbReference type="VEuPathDB" id="FungiDB:SPAC2C4.15c"/>
<dbReference type="eggNOG" id="KOG1364">
    <property type="taxonomic scope" value="Eukaryota"/>
</dbReference>
<dbReference type="HOGENOM" id="CLU_021255_2_1_1"/>
<dbReference type="InParanoid" id="O14048"/>
<dbReference type="OMA" id="CAFPRKS"/>
<dbReference type="PhylomeDB" id="O14048"/>
<dbReference type="Reactome" id="R-SPO-8951664">
    <property type="pathway name" value="Neddylation"/>
</dbReference>
<dbReference type="Reactome" id="R-SPO-9755511">
    <property type="pathway name" value="KEAP1-NFE2L2 pathway"/>
</dbReference>
<dbReference type="PRO" id="PR:O14048"/>
<dbReference type="Proteomes" id="UP000002485">
    <property type="component" value="Chromosome I"/>
</dbReference>
<dbReference type="GO" id="GO:0005737">
    <property type="term" value="C:cytoplasm"/>
    <property type="evidence" value="ECO:0000266"/>
    <property type="project" value="PomBase"/>
</dbReference>
<dbReference type="GO" id="GO:0005634">
    <property type="term" value="C:nucleus"/>
    <property type="evidence" value="ECO:0000318"/>
    <property type="project" value="GO_Central"/>
</dbReference>
<dbReference type="GO" id="GO:0043130">
    <property type="term" value="F:ubiquitin binding"/>
    <property type="evidence" value="ECO:0000353"/>
    <property type="project" value="PomBase"/>
</dbReference>
<dbReference type="GO" id="GO:0043161">
    <property type="term" value="P:proteasome-mediated ubiquitin-dependent protein catabolic process"/>
    <property type="evidence" value="ECO:0000316"/>
    <property type="project" value="PomBase"/>
</dbReference>
<dbReference type="CDD" id="cd02958">
    <property type="entry name" value="UAS"/>
    <property type="match status" value="1"/>
</dbReference>
<dbReference type="CDD" id="cd01767">
    <property type="entry name" value="UBX"/>
    <property type="match status" value="1"/>
</dbReference>
<dbReference type="FunFam" id="3.40.30.10:FF:000079">
    <property type="entry name" value="UBX domain-containing protein 7"/>
    <property type="match status" value="1"/>
</dbReference>
<dbReference type="Gene3D" id="1.10.8.10">
    <property type="entry name" value="DNA helicase RuvA subunit, C-terminal domain"/>
    <property type="match status" value="1"/>
</dbReference>
<dbReference type="Gene3D" id="3.40.30.10">
    <property type="entry name" value="Glutaredoxin"/>
    <property type="match status" value="1"/>
</dbReference>
<dbReference type="Gene3D" id="3.10.20.90">
    <property type="entry name" value="Phosphatidylinositol 3-kinase Catalytic Subunit, Chain A, domain 1"/>
    <property type="match status" value="1"/>
</dbReference>
<dbReference type="InterPro" id="IPR036249">
    <property type="entry name" value="Thioredoxin-like_sf"/>
</dbReference>
<dbReference type="InterPro" id="IPR006577">
    <property type="entry name" value="UAS"/>
</dbReference>
<dbReference type="InterPro" id="IPR009060">
    <property type="entry name" value="UBA-like_sf"/>
</dbReference>
<dbReference type="InterPro" id="IPR029071">
    <property type="entry name" value="Ubiquitin-like_domsf"/>
</dbReference>
<dbReference type="InterPro" id="IPR017346">
    <property type="entry name" value="UBX_7/2"/>
</dbReference>
<dbReference type="InterPro" id="IPR001012">
    <property type="entry name" value="UBX_dom"/>
</dbReference>
<dbReference type="InterPro" id="IPR050730">
    <property type="entry name" value="UBX_domain-protein"/>
</dbReference>
<dbReference type="PANTHER" id="PTHR23322">
    <property type="entry name" value="FAS-ASSOCIATED PROTEIN"/>
    <property type="match status" value="1"/>
</dbReference>
<dbReference type="PANTHER" id="PTHR23322:SF6">
    <property type="entry name" value="UBX DOMAIN-CONTAINING PROTEIN 7"/>
    <property type="match status" value="1"/>
</dbReference>
<dbReference type="Pfam" id="PF13899">
    <property type="entry name" value="Thioredoxin_7"/>
    <property type="match status" value="1"/>
</dbReference>
<dbReference type="Pfam" id="PF14555">
    <property type="entry name" value="UBA_4"/>
    <property type="match status" value="1"/>
</dbReference>
<dbReference type="Pfam" id="PF00789">
    <property type="entry name" value="UBX"/>
    <property type="match status" value="1"/>
</dbReference>
<dbReference type="PIRSF" id="PIRSF037991">
    <property type="entry name" value="UCP037991_UBX7/2"/>
    <property type="match status" value="1"/>
</dbReference>
<dbReference type="SMART" id="SM00594">
    <property type="entry name" value="UAS"/>
    <property type="match status" value="1"/>
</dbReference>
<dbReference type="SMART" id="SM00166">
    <property type="entry name" value="UBX"/>
    <property type="match status" value="1"/>
</dbReference>
<dbReference type="SUPFAM" id="SSF52833">
    <property type="entry name" value="Thioredoxin-like"/>
    <property type="match status" value="1"/>
</dbReference>
<dbReference type="SUPFAM" id="SSF46934">
    <property type="entry name" value="UBA-like"/>
    <property type="match status" value="1"/>
</dbReference>
<dbReference type="SUPFAM" id="SSF54236">
    <property type="entry name" value="Ubiquitin-like"/>
    <property type="match status" value="1"/>
</dbReference>
<dbReference type="PROSITE" id="PS50033">
    <property type="entry name" value="UBX"/>
    <property type="match status" value="1"/>
</dbReference>
<protein>
    <recommendedName>
        <fullName>UBX domain-containing protein 2</fullName>
    </recommendedName>
</protein>
<organism>
    <name type="scientific">Schizosaccharomyces pombe (strain 972 / ATCC 24843)</name>
    <name type="common">Fission yeast</name>
    <dbReference type="NCBI Taxonomy" id="284812"/>
    <lineage>
        <taxon>Eukaryota</taxon>
        <taxon>Fungi</taxon>
        <taxon>Dikarya</taxon>
        <taxon>Ascomycota</taxon>
        <taxon>Taphrinomycotina</taxon>
        <taxon>Schizosaccharomycetes</taxon>
        <taxon>Schizosaccharomycetales</taxon>
        <taxon>Schizosaccharomycetaceae</taxon>
        <taxon>Schizosaccharomyces</taxon>
    </lineage>
</organism>
<name>UBX2_SCHPO</name>
<feature type="chain" id="PRO_0000211005" description="UBX domain-containing protein 2">
    <location>
        <begin position="1"/>
        <end position="427"/>
    </location>
</feature>
<feature type="domain" description="UBX" evidence="2">
    <location>
        <begin position="349"/>
        <end position="425"/>
    </location>
</feature>
<feature type="region of interest" description="Disordered" evidence="3">
    <location>
        <begin position="115"/>
        <end position="143"/>
    </location>
</feature>
<feature type="region of interest" description="Disordered" evidence="3">
    <location>
        <begin position="273"/>
        <end position="331"/>
    </location>
</feature>
<feature type="compositionally biased region" description="Low complexity" evidence="3">
    <location>
        <begin position="311"/>
        <end position="326"/>
    </location>
</feature>
<feature type="modified residue" description="Phosphoserine" evidence="5">
    <location>
        <position position="371"/>
    </location>
</feature>
<sequence length="427" mass="47235">MDGDEASLVANFCAITNSTPEKAQEYLSVADGDLSTAITLFFESGGVTDVQSSYIEAPSQTEPVEEIRAPIAPTREVLVDPLADMSAGTSIMGNNFGFGGFPRMNRRQRRRMGIFDQSPSQIPFPSSNTEDSSEESDSSSRASRLAKLFRPPYDIISNLSLDEARIEASSQKRWILVNLQTSTSFECQVLNRDLWKDESVKEVIRAHFLFLQLLDDEEPGMEFKRFYPVRSTPHIAILDPRTGERVKEWSKSFTPADFVIALNDFLEGCTLDETSGRKNPLGAKSQKPVEAMSEDEQMHKAIAASLGNGNSTTESQGESSSQQAESHGVADDTVHKIDSAECDAEEPSPGPNVTRIQIRMPNGARFIRRFSLTDPVSKVYAYVKGVAEGADKQPFSLTFQRKSLWTSLDSTIKEAGIQNTALQFEFQ</sequence>